<accession>Q82SV5</accession>
<dbReference type="EMBL" id="AL954747">
    <property type="protein sequence ID" value="CAD86106.1"/>
    <property type="molecule type" value="Genomic_DNA"/>
</dbReference>
<dbReference type="SMR" id="Q82SV5"/>
<dbReference type="STRING" id="228410.NE2194"/>
<dbReference type="GeneID" id="87105330"/>
<dbReference type="KEGG" id="neu:NE2194"/>
<dbReference type="eggNOG" id="COG3028">
    <property type="taxonomic scope" value="Bacteria"/>
</dbReference>
<dbReference type="HOGENOM" id="CLU_106757_3_0_4"/>
<dbReference type="OrthoDB" id="5293604at2"/>
<dbReference type="PhylomeDB" id="Q82SV5"/>
<dbReference type="Proteomes" id="UP000001416">
    <property type="component" value="Chromosome"/>
</dbReference>
<dbReference type="GO" id="GO:0005829">
    <property type="term" value="C:cytosol"/>
    <property type="evidence" value="ECO:0007669"/>
    <property type="project" value="TreeGrafter"/>
</dbReference>
<dbReference type="GO" id="GO:0043022">
    <property type="term" value="F:ribosome binding"/>
    <property type="evidence" value="ECO:0007669"/>
    <property type="project" value="UniProtKB-UniRule"/>
</dbReference>
<dbReference type="GO" id="GO:0019843">
    <property type="term" value="F:rRNA binding"/>
    <property type="evidence" value="ECO:0007669"/>
    <property type="project" value="UniProtKB-UniRule"/>
</dbReference>
<dbReference type="GO" id="GO:1902626">
    <property type="term" value="P:assembly of large subunit precursor of preribosome"/>
    <property type="evidence" value="ECO:0007669"/>
    <property type="project" value="UniProtKB-UniRule"/>
</dbReference>
<dbReference type="CDD" id="cd16331">
    <property type="entry name" value="YjgA-like"/>
    <property type="match status" value="1"/>
</dbReference>
<dbReference type="Gene3D" id="1.10.60.30">
    <property type="entry name" value="PSPTO4464-like domains"/>
    <property type="match status" value="2"/>
</dbReference>
<dbReference type="HAMAP" id="MF_00765">
    <property type="entry name" value="DarP"/>
    <property type="match status" value="1"/>
</dbReference>
<dbReference type="InterPro" id="IPR006839">
    <property type="entry name" value="DarP"/>
</dbReference>
<dbReference type="InterPro" id="IPR023153">
    <property type="entry name" value="DarP_sf"/>
</dbReference>
<dbReference type="NCBIfam" id="NF003593">
    <property type="entry name" value="PRK05255.1-1"/>
    <property type="match status" value="1"/>
</dbReference>
<dbReference type="PANTHER" id="PTHR38101">
    <property type="entry name" value="UPF0307 PROTEIN YJGA"/>
    <property type="match status" value="1"/>
</dbReference>
<dbReference type="PANTHER" id="PTHR38101:SF1">
    <property type="entry name" value="UPF0307 PROTEIN YJGA"/>
    <property type="match status" value="1"/>
</dbReference>
<dbReference type="Pfam" id="PF04751">
    <property type="entry name" value="DarP"/>
    <property type="match status" value="1"/>
</dbReference>
<dbReference type="PIRSF" id="PIRSF016183">
    <property type="entry name" value="UCP016183"/>
    <property type="match status" value="1"/>
</dbReference>
<dbReference type="SUPFAM" id="SSF158710">
    <property type="entry name" value="PSPTO4464-like"/>
    <property type="match status" value="1"/>
</dbReference>
<evidence type="ECO:0000255" key="1">
    <source>
        <dbReference type="HAMAP-Rule" id="MF_00765"/>
    </source>
</evidence>
<evidence type="ECO:0000256" key="2">
    <source>
        <dbReference type="SAM" id="MobiDB-lite"/>
    </source>
</evidence>
<gene>
    <name evidence="1" type="primary">darP</name>
    <name type="ordered locus">NE2194</name>
</gene>
<comment type="function">
    <text evidence="1">Member of a network of 50S ribosomal subunit biogenesis factors which assembles along the 30S-50S interface, preventing incorrect 23S rRNA structures from forming. Promotes peptidyl transferase center (PTC) maturation.</text>
</comment>
<comment type="subcellular location">
    <subcellularLocation>
        <location evidence="1">Cytoplasm</location>
    </subcellularLocation>
    <text evidence="1">Associates with late stage pre-50S ribosomal subunits.</text>
</comment>
<comment type="similarity">
    <text evidence="1">Belongs to the DarP family.</text>
</comment>
<name>DARP_NITEU</name>
<proteinExistence type="inferred from homology"/>
<reference key="1">
    <citation type="journal article" date="2003" name="J. Bacteriol.">
        <title>Complete genome sequence of the ammonia-oxidizing bacterium and obligate chemolithoautotroph Nitrosomonas europaea.</title>
        <authorList>
            <person name="Chain P."/>
            <person name="Lamerdin J.E."/>
            <person name="Larimer F.W."/>
            <person name="Regala W."/>
            <person name="Lao V."/>
            <person name="Land M.L."/>
            <person name="Hauser L."/>
            <person name="Hooper A.B."/>
            <person name="Klotz M.G."/>
            <person name="Norton J."/>
            <person name="Sayavedra-Soto L.A."/>
            <person name="Arciero D.M."/>
            <person name="Hommes N.G."/>
            <person name="Whittaker M.M."/>
            <person name="Arp D.J."/>
        </authorList>
    </citation>
    <scope>NUCLEOTIDE SEQUENCE [LARGE SCALE GENOMIC DNA]</scope>
    <source>
        <strain>ATCC 19718 / CIP 103999 / KCTC 2705 / NBRC 14298</strain>
    </source>
</reference>
<protein>
    <recommendedName>
        <fullName evidence="1">Dual-action ribosomal maturation protein DarP</fullName>
    </recommendedName>
    <alternativeName>
        <fullName evidence="1">Large ribosomal subunit assembly factor DarP</fullName>
    </alternativeName>
</protein>
<feature type="chain" id="PRO_0000208220" description="Dual-action ribosomal maturation protein DarP">
    <location>
        <begin position="1"/>
        <end position="178"/>
    </location>
</feature>
<feature type="region of interest" description="Disordered" evidence="2">
    <location>
        <begin position="1"/>
        <end position="25"/>
    </location>
</feature>
<feature type="compositionally biased region" description="Polar residues" evidence="2">
    <location>
        <begin position="1"/>
        <end position="14"/>
    </location>
</feature>
<keyword id="KW-0963">Cytoplasm</keyword>
<keyword id="KW-1185">Reference proteome</keyword>
<keyword id="KW-0690">Ribosome biogenesis</keyword>
<keyword id="KW-0694">RNA-binding</keyword>
<keyword id="KW-0699">rRNA-binding</keyword>
<organism>
    <name type="scientific">Nitrosomonas europaea (strain ATCC 19718 / CIP 103999 / KCTC 2705 / NBRC 14298)</name>
    <dbReference type="NCBI Taxonomy" id="228410"/>
    <lineage>
        <taxon>Bacteria</taxon>
        <taxon>Pseudomonadati</taxon>
        <taxon>Pseudomonadota</taxon>
        <taxon>Betaproteobacteria</taxon>
        <taxon>Nitrosomonadales</taxon>
        <taxon>Nitrosomonadaceae</taxon>
        <taxon>Nitrosomonas</taxon>
    </lineage>
</organism>
<sequence length="178" mass="20670">MTVSDHPQTVSQPDPESESRPSKTRLKQEMHALQALGERLVELEPARIAELDLPEKLAEALLEARKITSHGARRRHLQFIGKLMRAVDPLPVQEKLDAWQHTGMRHTAWLHQLERWRDRLISDETAVTEFVQTYPHTDVRQLRTLLRNIEKEKLAGKPPHNFRALFQLLRQIIPEIPG</sequence>